<comment type="function">
    <text evidence="1">Catalyzes the 2-thiolation of uridine at the wobble position (U34) of tRNA, leading to the formation of s(2)U34.</text>
</comment>
<comment type="catalytic activity">
    <reaction evidence="1">
        <text>S-sulfanyl-L-cysteinyl-[protein] + uridine(34) in tRNA + AH2 + ATP = 2-thiouridine(34) in tRNA + L-cysteinyl-[protein] + A + AMP + diphosphate + H(+)</text>
        <dbReference type="Rhea" id="RHEA:47032"/>
        <dbReference type="Rhea" id="RHEA-COMP:10131"/>
        <dbReference type="Rhea" id="RHEA-COMP:11726"/>
        <dbReference type="Rhea" id="RHEA-COMP:11727"/>
        <dbReference type="Rhea" id="RHEA-COMP:11728"/>
        <dbReference type="ChEBI" id="CHEBI:13193"/>
        <dbReference type="ChEBI" id="CHEBI:15378"/>
        <dbReference type="ChEBI" id="CHEBI:17499"/>
        <dbReference type="ChEBI" id="CHEBI:29950"/>
        <dbReference type="ChEBI" id="CHEBI:30616"/>
        <dbReference type="ChEBI" id="CHEBI:33019"/>
        <dbReference type="ChEBI" id="CHEBI:61963"/>
        <dbReference type="ChEBI" id="CHEBI:65315"/>
        <dbReference type="ChEBI" id="CHEBI:87170"/>
        <dbReference type="ChEBI" id="CHEBI:456215"/>
        <dbReference type="EC" id="2.8.1.13"/>
    </reaction>
</comment>
<comment type="subcellular location">
    <subcellularLocation>
        <location evidence="1">Cytoplasm</location>
    </subcellularLocation>
</comment>
<comment type="similarity">
    <text evidence="1">Belongs to the MnmA/TRMU family.</text>
</comment>
<keyword id="KW-0067">ATP-binding</keyword>
<keyword id="KW-0963">Cytoplasm</keyword>
<keyword id="KW-1015">Disulfide bond</keyword>
<keyword id="KW-0547">Nucleotide-binding</keyword>
<keyword id="KW-1185">Reference proteome</keyword>
<keyword id="KW-0694">RNA-binding</keyword>
<keyword id="KW-0808">Transferase</keyword>
<keyword id="KW-0819">tRNA processing</keyword>
<keyword id="KW-0820">tRNA-binding</keyword>
<evidence type="ECO:0000255" key="1">
    <source>
        <dbReference type="HAMAP-Rule" id="MF_00144"/>
    </source>
</evidence>
<feature type="chain" id="PRO_0000349728" description="tRNA-specific 2-thiouridylase MnmA">
    <location>
        <begin position="1"/>
        <end position="389"/>
    </location>
</feature>
<feature type="region of interest" description="Interaction with tRNA" evidence="1">
    <location>
        <begin position="174"/>
        <end position="176"/>
    </location>
</feature>
<feature type="active site" description="Nucleophile" evidence="1">
    <location>
        <position position="128"/>
    </location>
</feature>
<feature type="active site" description="Cysteine persulfide intermediate" evidence="1">
    <location>
        <position position="225"/>
    </location>
</feature>
<feature type="binding site" evidence="1">
    <location>
        <begin position="34"/>
        <end position="41"/>
    </location>
    <ligand>
        <name>ATP</name>
        <dbReference type="ChEBI" id="CHEBI:30616"/>
    </ligand>
</feature>
<feature type="binding site" evidence="1">
    <location>
        <position position="60"/>
    </location>
    <ligand>
        <name>ATP</name>
        <dbReference type="ChEBI" id="CHEBI:30616"/>
    </ligand>
</feature>
<feature type="binding site" evidence="1">
    <location>
        <position position="152"/>
    </location>
    <ligand>
        <name>ATP</name>
        <dbReference type="ChEBI" id="CHEBI:30616"/>
    </ligand>
</feature>
<feature type="site" description="Interaction with tRNA" evidence="1">
    <location>
        <position position="153"/>
    </location>
</feature>
<feature type="site" description="Interaction with tRNA" evidence="1">
    <location>
        <position position="365"/>
    </location>
</feature>
<feature type="disulfide bond" description="Alternate" evidence="1">
    <location>
        <begin position="128"/>
        <end position="225"/>
    </location>
</feature>
<sequence length="389" mass="42019">MTAPSLSLRHAAPYSTVNSLGFPKPPAQTRVVVAMSGGVDSSVVAAMLAAQGYDVIGVTLQLYDHGAALAKKGACCAGQDIHDARRVAERIGFPHYVLDYENKFRESVIEEFADAYLAGATPVPCIRCNERVKFRDLLQTARELDADCMATGHYIRRLMGPKGAELHMAADPARDQSYFLFSTTQEQLDFLRFPLGGLASKAETRALAAQYGLAVADKPDSQDICFVPNGDYASVIEKLRPGAADPGEIVDMDGNVLGSHRGVIHYTIGQRRGLGIGGLGDPLYVVRLEPDTRRVVVGPKQALATKIVPVTEVNWLGDEPFEDEIAVTARIRSTRPPRPAILRVTGKHRAEIELLDPEEGVSPGQACVFYATEGSRVLGGGWISHRRGG</sequence>
<name>MNMA_PARDP</name>
<dbReference type="EC" id="2.8.1.13" evidence="1"/>
<dbReference type="EMBL" id="CP000490">
    <property type="protein sequence ID" value="ABL72164.1"/>
    <property type="molecule type" value="Genomic_DNA"/>
</dbReference>
<dbReference type="RefSeq" id="WP_011750332.1">
    <property type="nucleotide sequence ID" value="NC_008687.1"/>
</dbReference>
<dbReference type="SMR" id="A1B9H0"/>
<dbReference type="STRING" id="318586.Pden_4098"/>
<dbReference type="EnsemblBacteria" id="ABL72164">
    <property type="protein sequence ID" value="ABL72164"/>
    <property type="gene ID" value="Pden_4098"/>
</dbReference>
<dbReference type="GeneID" id="93453765"/>
<dbReference type="KEGG" id="pde:Pden_4098"/>
<dbReference type="eggNOG" id="COG0482">
    <property type="taxonomic scope" value="Bacteria"/>
</dbReference>
<dbReference type="HOGENOM" id="CLU_035188_0_1_5"/>
<dbReference type="OrthoDB" id="9800696at2"/>
<dbReference type="Proteomes" id="UP000000361">
    <property type="component" value="Chromosome 2"/>
</dbReference>
<dbReference type="GO" id="GO:0005737">
    <property type="term" value="C:cytoplasm"/>
    <property type="evidence" value="ECO:0007669"/>
    <property type="project" value="UniProtKB-SubCell"/>
</dbReference>
<dbReference type="GO" id="GO:0005524">
    <property type="term" value="F:ATP binding"/>
    <property type="evidence" value="ECO:0007669"/>
    <property type="project" value="UniProtKB-KW"/>
</dbReference>
<dbReference type="GO" id="GO:0000049">
    <property type="term" value="F:tRNA binding"/>
    <property type="evidence" value="ECO:0007669"/>
    <property type="project" value="UniProtKB-KW"/>
</dbReference>
<dbReference type="GO" id="GO:0103016">
    <property type="term" value="F:tRNA-uridine 2-sulfurtransferase activity"/>
    <property type="evidence" value="ECO:0007669"/>
    <property type="project" value="UniProtKB-EC"/>
</dbReference>
<dbReference type="GO" id="GO:0002143">
    <property type="term" value="P:tRNA wobble position uridine thiolation"/>
    <property type="evidence" value="ECO:0007669"/>
    <property type="project" value="TreeGrafter"/>
</dbReference>
<dbReference type="CDD" id="cd01998">
    <property type="entry name" value="MnmA_TRMU-like"/>
    <property type="match status" value="1"/>
</dbReference>
<dbReference type="FunFam" id="2.30.30.280:FF:000001">
    <property type="entry name" value="tRNA-specific 2-thiouridylase MnmA"/>
    <property type="match status" value="1"/>
</dbReference>
<dbReference type="FunFam" id="3.40.50.620:FF:000115">
    <property type="entry name" value="tRNA-specific 2-thiouridylase MnmA"/>
    <property type="match status" value="1"/>
</dbReference>
<dbReference type="Gene3D" id="2.30.30.280">
    <property type="entry name" value="Adenine nucleotide alpha hydrolases-like domains"/>
    <property type="match status" value="1"/>
</dbReference>
<dbReference type="Gene3D" id="3.40.50.620">
    <property type="entry name" value="HUPs"/>
    <property type="match status" value="1"/>
</dbReference>
<dbReference type="Gene3D" id="2.40.30.10">
    <property type="entry name" value="Translation factors"/>
    <property type="match status" value="1"/>
</dbReference>
<dbReference type="HAMAP" id="MF_00144">
    <property type="entry name" value="tRNA_thiouridyl_MnmA"/>
    <property type="match status" value="1"/>
</dbReference>
<dbReference type="InterPro" id="IPR004506">
    <property type="entry name" value="MnmA-like"/>
</dbReference>
<dbReference type="InterPro" id="IPR046885">
    <property type="entry name" value="MnmA-like_C"/>
</dbReference>
<dbReference type="InterPro" id="IPR046884">
    <property type="entry name" value="MnmA-like_central"/>
</dbReference>
<dbReference type="InterPro" id="IPR023382">
    <property type="entry name" value="MnmA-like_central_sf"/>
</dbReference>
<dbReference type="InterPro" id="IPR014729">
    <property type="entry name" value="Rossmann-like_a/b/a_fold"/>
</dbReference>
<dbReference type="NCBIfam" id="NF001138">
    <property type="entry name" value="PRK00143.1"/>
    <property type="match status" value="1"/>
</dbReference>
<dbReference type="NCBIfam" id="TIGR00420">
    <property type="entry name" value="trmU"/>
    <property type="match status" value="1"/>
</dbReference>
<dbReference type="PANTHER" id="PTHR11933:SF5">
    <property type="entry name" value="MITOCHONDRIAL TRNA-SPECIFIC 2-THIOURIDYLASE 1"/>
    <property type="match status" value="1"/>
</dbReference>
<dbReference type="PANTHER" id="PTHR11933">
    <property type="entry name" value="TRNA 5-METHYLAMINOMETHYL-2-THIOURIDYLATE -METHYLTRANSFERASE"/>
    <property type="match status" value="1"/>
</dbReference>
<dbReference type="Pfam" id="PF03054">
    <property type="entry name" value="tRNA_Me_trans"/>
    <property type="match status" value="1"/>
</dbReference>
<dbReference type="Pfam" id="PF20258">
    <property type="entry name" value="tRNA_Me_trans_C"/>
    <property type="match status" value="1"/>
</dbReference>
<dbReference type="Pfam" id="PF20259">
    <property type="entry name" value="tRNA_Me_trans_M"/>
    <property type="match status" value="1"/>
</dbReference>
<dbReference type="SUPFAM" id="SSF52402">
    <property type="entry name" value="Adenine nucleotide alpha hydrolases-like"/>
    <property type="match status" value="1"/>
</dbReference>
<proteinExistence type="inferred from homology"/>
<accession>A1B9H0</accession>
<protein>
    <recommendedName>
        <fullName evidence="1">tRNA-specific 2-thiouridylase MnmA</fullName>
        <ecNumber evidence="1">2.8.1.13</ecNumber>
    </recommendedName>
</protein>
<gene>
    <name evidence="1" type="primary">mnmA</name>
    <name type="ordered locus">Pden_4098</name>
</gene>
<reference key="1">
    <citation type="submission" date="2006-12" db="EMBL/GenBank/DDBJ databases">
        <title>Complete sequence of chromosome 2 of Paracoccus denitrificans PD1222.</title>
        <authorList>
            <person name="Copeland A."/>
            <person name="Lucas S."/>
            <person name="Lapidus A."/>
            <person name="Barry K."/>
            <person name="Detter J.C."/>
            <person name="Glavina del Rio T."/>
            <person name="Hammon N."/>
            <person name="Israni S."/>
            <person name="Dalin E."/>
            <person name="Tice H."/>
            <person name="Pitluck S."/>
            <person name="Munk A.C."/>
            <person name="Brettin T."/>
            <person name="Bruce D."/>
            <person name="Han C."/>
            <person name="Tapia R."/>
            <person name="Gilna P."/>
            <person name="Schmutz J."/>
            <person name="Larimer F."/>
            <person name="Land M."/>
            <person name="Hauser L."/>
            <person name="Kyrpides N."/>
            <person name="Lykidis A."/>
            <person name="Spiro S."/>
            <person name="Richardson D.J."/>
            <person name="Moir J.W.B."/>
            <person name="Ferguson S.J."/>
            <person name="van Spanning R.J.M."/>
            <person name="Richardson P."/>
        </authorList>
    </citation>
    <scope>NUCLEOTIDE SEQUENCE [LARGE SCALE GENOMIC DNA]</scope>
    <source>
        <strain>Pd 1222</strain>
    </source>
</reference>
<organism>
    <name type="scientific">Paracoccus denitrificans (strain Pd 1222)</name>
    <dbReference type="NCBI Taxonomy" id="318586"/>
    <lineage>
        <taxon>Bacteria</taxon>
        <taxon>Pseudomonadati</taxon>
        <taxon>Pseudomonadota</taxon>
        <taxon>Alphaproteobacteria</taxon>
        <taxon>Rhodobacterales</taxon>
        <taxon>Paracoccaceae</taxon>
        <taxon>Paracoccus</taxon>
    </lineage>
</organism>